<keyword id="KW-0375">Hydrogen ion transport</keyword>
<keyword id="KW-0406">Ion transport</keyword>
<keyword id="KW-0813">Transport</keyword>
<dbReference type="EMBL" id="AJ249388">
    <property type="protein sequence ID" value="CAB55498.1"/>
    <property type="molecule type" value="mRNA"/>
</dbReference>
<dbReference type="RefSeq" id="XP_030032914.1">
    <property type="nucleotide sequence ID" value="XM_030177054.2"/>
</dbReference>
<dbReference type="RefSeq" id="XP_030032915.1">
    <property type="nucleotide sequence ID" value="XM_030177055.2"/>
</dbReference>
<dbReference type="SMR" id="Q9U5N1"/>
<dbReference type="DIP" id="DIP-61388N"/>
<dbReference type="IntAct" id="Q9U5N1">
    <property type="interactions" value="1"/>
</dbReference>
<dbReference type="BindingDB" id="Q9U5N1"/>
<dbReference type="ChEMBL" id="CHEMBL2189157"/>
<dbReference type="EnsemblMetazoa" id="XM_030177054.2">
    <property type="protein sequence ID" value="XP_030032914.1"/>
    <property type="gene ID" value="LOC115449278"/>
</dbReference>
<dbReference type="EnsemblMetazoa" id="XM_030177055.2">
    <property type="protein sequence ID" value="XP_030032915.1"/>
    <property type="gene ID" value="LOC115449278"/>
</dbReference>
<dbReference type="GeneID" id="115449278"/>
<dbReference type="OrthoDB" id="6605928at2759"/>
<dbReference type="GO" id="GO:0005765">
    <property type="term" value="C:lysosomal membrane"/>
    <property type="evidence" value="ECO:0007669"/>
    <property type="project" value="TreeGrafter"/>
</dbReference>
<dbReference type="GO" id="GO:0000221">
    <property type="term" value="C:vacuolar proton-transporting V-type ATPase, V1 domain"/>
    <property type="evidence" value="ECO:0007669"/>
    <property type="project" value="TreeGrafter"/>
</dbReference>
<dbReference type="GO" id="GO:0046961">
    <property type="term" value="F:proton-transporting ATPase activity, rotational mechanism"/>
    <property type="evidence" value="ECO:0007669"/>
    <property type="project" value="InterPro"/>
</dbReference>
<dbReference type="CDD" id="cd14785">
    <property type="entry name" value="V-ATPase_C"/>
    <property type="match status" value="1"/>
</dbReference>
<dbReference type="FunFam" id="3.30.70.100:FF:000002">
    <property type="entry name" value="V-type proton ATPase subunit C"/>
    <property type="match status" value="1"/>
</dbReference>
<dbReference type="Gene3D" id="3.30.70.100">
    <property type="match status" value="1"/>
</dbReference>
<dbReference type="Gene3D" id="1.20.1460.10">
    <property type="entry name" value="subunit c (vma5p) of the yeast v-atpase, domain 2"/>
    <property type="match status" value="1"/>
</dbReference>
<dbReference type="Gene3D" id="3.30.70.1180">
    <property type="entry name" value="Vacuolar atp synthase subunit c, domain 1"/>
    <property type="match status" value="1"/>
</dbReference>
<dbReference type="InterPro" id="IPR004907">
    <property type="entry name" value="ATPase_V1-cplx_csu"/>
</dbReference>
<dbReference type="InterPro" id="IPR036132">
    <property type="entry name" value="Vac_ATP_synth_c_sf"/>
</dbReference>
<dbReference type="PANTHER" id="PTHR10137">
    <property type="entry name" value="V-TYPE PROTON ATPASE SUBUNIT C"/>
    <property type="match status" value="1"/>
</dbReference>
<dbReference type="PANTHER" id="PTHR10137:SF0">
    <property type="entry name" value="V-TYPE PROTON ATPASE SUBUNIT C"/>
    <property type="match status" value="1"/>
</dbReference>
<dbReference type="Pfam" id="PF03223">
    <property type="entry name" value="V-ATPase_C"/>
    <property type="match status" value="1"/>
</dbReference>
<dbReference type="SUPFAM" id="SSF118203">
    <property type="entry name" value="Vacuolar ATP synthase subunit C"/>
    <property type="match status" value="1"/>
</dbReference>
<proteinExistence type="evidence at transcript level"/>
<feature type="chain" id="PRO_0000209354" description="V-type proton ATPase subunit C">
    <location>
        <begin position="1"/>
        <end position="385"/>
    </location>
</feature>
<organism>
    <name type="scientific">Manduca sexta</name>
    <name type="common">Tobacco hawkmoth</name>
    <name type="synonym">Tobacco hornworm</name>
    <dbReference type="NCBI Taxonomy" id="7130"/>
    <lineage>
        <taxon>Eukaryota</taxon>
        <taxon>Metazoa</taxon>
        <taxon>Ecdysozoa</taxon>
        <taxon>Arthropoda</taxon>
        <taxon>Hexapoda</taxon>
        <taxon>Insecta</taxon>
        <taxon>Pterygota</taxon>
        <taxon>Neoptera</taxon>
        <taxon>Endopterygota</taxon>
        <taxon>Lepidoptera</taxon>
        <taxon>Glossata</taxon>
        <taxon>Ditrysia</taxon>
        <taxon>Bombycoidea</taxon>
        <taxon>Sphingidae</taxon>
        <taxon>Sphinginae</taxon>
        <taxon>Sphingini</taxon>
        <taxon>Manduca</taxon>
    </lineage>
</organism>
<name>VATC_MANSE</name>
<comment type="function">
    <text evidence="1 2 3">Subunit of the V1 complex of vacuolar(H+)-ATPase (V-ATPase), a multisubunit enzyme composed of a peripheral complex (V1) that hydrolyzes ATP and a membrane integral complex (V0) that translocates protons (By similarity). V-ATPase is responsible for acidifying and maintaining the pH of intracellular compartments and in some cell types, is targeted to the plasma membrane, where it is responsible for acidifying the extracellular environment (By similarity). Subunit C is necessary for the assembly of the catalytic sector of the enzyme and is likely to have a specific function in its catalytic activity (By similarity).</text>
</comment>
<comment type="subunit">
    <text evidence="2">V-ATPase is a heteromultimeric enzyme made up of two complexes: the ATP-hydrolytic V1 complex and the proton translocation V0 complex (By similarity). The V1 complex consists of three catalytic AB heterodimers that form a heterohexamer, three peripheral stalks each consisting of EG heterodimers, one central rotor including subunits D and F, and the regulatory subunits C and H (By similarity). The proton translocation complex V0 consists of the proton transport subunit a, a ring of proteolipid subunits c9c'', rotary subunit d, subunits e and f, and the accessory subunits VhaAC45 and ATP6AP2 (By similarity).</text>
</comment>
<comment type="similarity">
    <text evidence="4">Belongs to the V-ATPase C subunit family.</text>
</comment>
<reference key="1">
    <citation type="journal article" date="2000" name="Biochim. Biophys. Acta">
        <title>The multigene family of the tobacco hornworm V-ATPase: novel subunits a, C, D, H, and putative isoforms.</title>
        <authorList>
            <person name="Merzendorfer H."/>
            <person name="Reineke S."/>
            <person name="Zhao X.F."/>
            <person name="Jacobmeier B."/>
            <person name="Harvey W.R."/>
            <person name="Wieczorek H."/>
        </authorList>
    </citation>
    <scope>NUCLEOTIDE SEQUENCE [MRNA]</scope>
    <source>
        <tissue>Midgut</tissue>
    </source>
</reference>
<evidence type="ECO:0000250" key="1">
    <source>
        <dbReference type="UniProtKB" id="P21282"/>
    </source>
</evidence>
<evidence type="ECO:0000250" key="2">
    <source>
        <dbReference type="UniProtKB" id="P21283"/>
    </source>
</evidence>
<evidence type="ECO:0000250" key="3">
    <source>
        <dbReference type="UniProtKB" id="P31412"/>
    </source>
</evidence>
<evidence type="ECO:0000305" key="4"/>
<sequence length="385" mass="44127">MSEYWLISAPGDKTCQQTWEALNQATKANNLSLNYKFPIPDLKVGTLDQLVGLSDDLGKLDTFVEGVTRKVAQYLGEVLEDQRDKLHENLTANNDDLPHYLTRFQWDMAKYPIKQSLRNIADIISKQVGQIDADLKVKSSAYNALKGNLQNLEKKQTGSLLTRNLADLVKKEHFILDSEYLTTLLVIVPKSMFNDWNANYEKITDMIVPRSTQLIHQDGDYGLFTVTLFKKVVDEFKLHARERKFVVREFAYNEADLVAGKNEITKLLTDKKKQFGPLVRWLKVNFSECFCAWIHVKALRVFVESVLRYGLPVNFQAALLVPSRRSARRLRDTLHALYAHLDHSAHHHANAQQDSVELAGLGFGQSEYYPYVFYKINIDMIEKAA</sequence>
<protein>
    <recommendedName>
        <fullName>V-type proton ATPase subunit C</fullName>
        <shortName>V-ATPase subunit C</shortName>
    </recommendedName>
    <alternativeName>
        <fullName>Vacuolar proton pump subunit C</fullName>
    </alternativeName>
</protein>
<accession>Q9U5N1</accession>